<accession>Q8CWX8</accession>
<sequence>MGLFNRLFGKKRQEEKSTTDSIEEAAEQEVTQEKPALLAETAETAESQQSVYEKDVTESQAEQVSDARIIEDGQNSKEPAASGHSVQEHKQQPVQHQQEVFHSENSVAAVQNNTETMPSQQKKDEKPNQSPDFMAEYYARKAELAQKVESQKPAETAEQESQTTLSDQKETETAVNQSEEEASSQIAESVESEEEKYNRSLKKTRTGFGARLNAFLANFRNVDEEFFEDLEEMLILSDVGVQVASTLTEDLRYEAKLEKAKKPEALRRVIIEKLVDIYDKDGQFNEKINFQNDLTVMLFVGVNGVGKTTSIGKLAYKYKHQGKKVMLVAADTFRAGAVAQLAEWGRRVDVPVVTGPKNADPASVVYDGVERAVAADVDILMIDTAGRLQNKDNLMAELEKIGRVVKRVIPDAPHETLLTLDASTGQNALVQAKEFSKITPLTGLILTKIDGTAKGGVVLAIRQELAIPVKFIGFGEKIDDIGEFHSEDFMRGLLEGLL</sequence>
<evidence type="ECO:0000255" key="1">
    <source>
        <dbReference type="HAMAP-Rule" id="MF_00920"/>
    </source>
</evidence>
<evidence type="ECO:0000256" key="2">
    <source>
        <dbReference type="SAM" id="MobiDB-lite"/>
    </source>
</evidence>
<evidence type="ECO:0000269" key="3">
    <source>
    </source>
</evidence>
<comment type="function">
    <text evidence="1">Involved in targeting and insertion of nascent membrane proteins into the cytoplasmic membrane. Acts as a receptor for the complex formed by the signal recognition particle (SRP) and the ribosome-nascent chain (RNC).</text>
</comment>
<comment type="catalytic activity">
    <reaction evidence="1">
        <text>GTP + H2O = GDP + phosphate + H(+)</text>
        <dbReference type="Rhea" id="RHEA:19669"/>
        <dbReference type="ChEBI" id="CHEBI:15377"/>
        <dbReference type="ChEBI" id="CHEBI:15378"/>
        <dbReference type="ChEBI" id="CHEBI:37565"/>
        <dbReference type="ChEBI" id="CHEBI:43474"/>
        <dbReference type="ChEBI" id="CHEBI:58189"/>
        <dbReference type="EC" id="3.6.5.4"/>
    </reaction>
</comment>
<comment type="subunit">
    <text evidence="1">Part of the signal recognition particle protein translocation system, which is composed of SRP and FtsY.</text>
</comment>
<comment type="subcellular location">
    <subcellularLocation>
        <location>Cell membrane</location>
        <topology>Peripheral membrane protein</topology>
        <orientation>Cytoplasmic side</orientation>
    </subcellularLocation>
    <subcellularLocation>
        <location evidence="1">Cytoplasm</location>
    </subcellularLocation>
</comment>
<comment type="disruption phenotype">
    <text evidence="3">Doubling time increases for growth under nonstress conditions, unable to initiate growth at pH 5.0 and under 3.5% NaCl salt stress. Double deletions of FtsY and Ffh, or FtsY and YidC2 are barely able to grow in the absence of stress.</text>
</comment>
<comment type="similarity">
    <text evidence="1">Belongs to the GTP-binding SRP family. FtsY subfamily.</text>
</comment>
<dbReference type="EC" id="3.6.5.4" evidence="1"/>
<dbReference type="EMBL" id="AE014133">
    <property type="protein sequence ID" value="AAN58468.1"/>
    <property type="molecule type" value="Genomic_DNA"/>
</dbReference>
<dbReference type="RefSeq" id="NP_721162.1">
    <property type="nucleotide sequence ID" value="NC_004350.2"/>
</dbReference>
<dbReference type="RefSeq" id="WP_002263634.1">
    <property type="nucleotide sequence ID" value="NC_004350.2"/>
</dbReference>
<dbReference type="SMR" id="Q8CWX8"/>
<dbReference type="STRING" id="210007.SMU_744"/>
<dbReference type="KEGG" id="smu:SMU_744"/>
<dbReference type="PATRIC" id="fig|210007.7.peg.658"/>
<dbReference type="eggNOG" id="COG0552">
    <property type="taxonomic scope" value="Bacteria"/>
</dbReference>
<dbReference type="HOGENOM" id="CLU_009301_2_1_9"/>
<dbReference type="OrthoDB" id="9804720at2"/>
<dbReference type="PhylomeDB" id="Q8CWX8"/>
<dbReference type="Proteomes" id="UP000002512">
    <property type="component" value="Chromosome"/>
</dbReference>
<dbReference type="GO" id="GO:0005737">
    <property type="term" value="C:cytoplasm"/>
    <property type="evidence" value="ECO:0007669"/>
    <property type="project" value="UniProtKB-SubCell"/>
</dbReference>
<dbReference type="GO" id="GO:0005886">
    <property type="term" value="C:plasma membrane"/>
    <property type="evidence" value="ECO:0007669"/>
    <property type="project" value="UniProtKB-SubCell"/>
</dbReference>
<dbReference type="GO" id="GO:0016887">
    <property type="term" value="F:ATP hydrolysis activity"/>
    <property type="evidence" value="ECO:0007669"/>
    <property type="project" value="InterPro"/>
</dbReference>
<dbReference type="GO" id="GO:0005525">
    <property type="term" value="F:GTP binding"/>
    <property type="evidence" value="ECO:0007669"/>
    <property type="project" value="UniProtKB-UniRule"/>
</dbReference>
<dbReference type="GO" id="GO:0003924">
    <property type="term" value="F:GTPase activity"/>
    <property type="evidence" value="ECO:0007669"/>
    <property type="project" value="UniProtKB-UniRule"/>
</dbReference>
<dbReference type="GO" id="GO:0005047">
    <property type="term" value="F:signal recognition particle binding"/>
    <property type="evidence" value="ECO:0007669"/>
    <property type="project" value="TreeGrafter"/>
</dbReference>
<dbReference type="GO" id="GO:0006614">
    <property type="term" value="P:SRP-dependent cotranslational protein targeting to membrane"/>
    <property type="evidence" value="ECO:0007669"/>
    <property type="project" value="InterPro"/>
</dbReference>
<dbReference type="CDD" id="cd17874">
    <property type="entry name" value="FtsY"/>
    <property type="match status" value="1"/>
</dbReference>
<dbReference type="FunFam" id="1.20.120.140:FF:000002">
    <property type="entry name" value="Signal recognition particle receptor FtsY"/>
    <property type="match status" value="1"/>
</dbReference>
<dbReference type="FunFam" id="3.40.50.300:FF:000053">
    <property type="entry name" value="Signal recognition particle receptor FtsY"/>
    <property type="match status" value="1"/>
</dbReference>
<dbReference type="Gene3D" id="3.40.50.300">
    <property type="entry name" value="P-loop containing nucleotide triphosphate hydrolases"/>
    <property type="match status" value="1"/>
</dbReference>
<dbReference type="Gene3D" id="1.20.120.140">
    <property type="entry name" value="Signal recognition particle SRP54, nucleotide-binding domain"/>
    <property type="match status" value="1"/>
</dbReference>
<dbReference type="HAMAP" id="MF_00920">
    <property type="entry name" value="FtsY"/>
    <property type="match status" value="1"/>
</dbReference>
<dbReference type="InterPro" id="IPR003593">
    <property type="entry name" value="AAA+_ATPase"/>
</dbReference>
<dbReference type="InterPro" id="IPR027417">
    <property type="entry name" value="P-loop_NTPase"/>
</dbReference>
<dbReference type="InterPro" id="IPR013822">
    <property type="entry name" value="Signal_recog_particl_SRP54_hlx"/>
</dbReference>
<dbReference type="InterPro" id="IPR004390">
    <property type="entry name" value="SR_rcpt_FtsY"/>
</dbReference>
<dbReference type="InterPro" id="IPR036225">
    <property type="entry name" value="SRP/SRP_N"/>
</dbReference>
<dbReference type="InterPro" id="IPR000897">
    <property type="entry name" value="SRP54_GTPase_dom"/>
</dbReference>
<dbReference type="InterPro" id="IPR042101">
    <property type="entry name" value="SRP54_N_sf"/>
</dbReference>
<dbReference type="NCBIfam" id="TIGR00064">
    <property type="entry name" value="ftsY"/>
    <property type="match status" value="1"/>
</dbReference>
<dbReference type="PANTHER" id="PTHR43134">
    <property type="entry name" value="SIGNAL RECOGNITION PARTICLE RECEPTOR SUBUNIT ALPHA"/>
    <property type="match status" value="1"/>
</dbReference>
<dbReference type="PANTHER" id="PTHR43134:SF1">
    <property type="entry name" value="SIGNAL RECOGNITION PARTICLE RECEPTOR SUBUNIT ALPHA"/>
    <property type="match status" value="1"/>
</dbReference>
<dbReference type="Pfam" id="PF00448">
    <property type="entry name" value="SRP54"/>
    <property type="match status" value="1"/>
</dbReference>
<dbReference type="Pfam" id="PF02881">
    <property type="entry name" value="SRP54_N"/>
    <property type="match status" value="1"/>
</dbReference>
<dbReference type="SMART" id="SM00382">
    <property type="entry name" value="AAA"/>
    <property type="match status" value="1"/>
</dbReference>
<dbReference type="SMART" id="SM00962">
    <property type="entry name" value="SRP54"/>
    <property type="match status" value="1"/>
</dbReference>
<dbReference type="SMART" id="SM00963">
    <property type="entry name" value="SRP54_N"/>
    <property type="match status" value="1"/>
</dbReference>
<dbReference type="SUPFAM" id="SSF47364">
    <property type="entry name" value="Domain of the SRP/SRP receptor G-proteins"/>
    <property type="match status" value="1"/>
</dbReference>
<dbReference type="SUPFAM" id="SSF52540">
    <property type="entry name" value="P-loop containing nucleoside triphosphate hydrolases"/>
    <property type="match status" value="1"/>
</dbReference>
<dbReference type="PROSITE" id="PS00300">
    <property type="entry name" value="SRP54"/>
    <property type="match status" value="1"/>
</dbReference>
<reference key="1">
    <citation type="journal article" date="2002" name="Proc. Natl. Acad. Sci. U.S.A.">
        <title>Genome sequence of Streptococcus mutans UA159, a cariogenic dental pathogen.</title>
        <authorList>
            <person name="Ajdic D.J."/>
            <person name="McShan W.M."/>
            <person name="McLaughlin R.E."/>
            <person name="Savic G."/>
            <person name="Chang J."/>
            <person name="Carson M.B."/>
            <person name="Primeaux C."/>
            <person name="Tian R."/>
            <person name="Kenton S."/>
            <person name="Jia H.G."/>
            <person name="Lin S.P."/>
            <person name="Qian Y."/>
            <person name="Li S."/>
            <person name="Zhu H."/>
            <person name="Najar F.Z."/>
            <person name="Lai H."/>
            <person name="White J."/>
            <person name="Roe B.A."/>
            <person name="Ferretti J.J."/>
        </authorList>
    </citation>
    <scope>NUCLEOTIDE SEQUENCE [LARGE SCALE GENOMIC DNA]</scope>
    <source>
        <strain>ATCC 700610 / UA159</strain>
    </source>
</reference>
<reference key="2">
    <citation type="journal article" date="2005" name="Proc. Natl. Acad. Sci. U.S.A.">
        <title>Streptococcal viability and diminished stress tolerance in mutants lacking the signal recognition particle pathway or YidC2.</title>
        <authorList>
            <person name="Hasona A."/>
            <person name="Crowley P.J."/>
            <person name="Levesque C.M."/>
            <person name="Mair R.W."/>
            <person name="Cvitkovitch D.G."/>
            <person name="Bleiweis A.S."/>
            <person name="Brady L.J."/>
        </authorList>
    </citation>
    <scope>DISRUPTION PHENOTYPE</scope>
    <source>
        <strain>NG8</strain>
    </source>
</reference>
<organism>
    <name type="scientific">Streptococcus mutans serotype c (strain ATCC 700610 / UA159)</name>
    <dbReference type="NCBI Taxonomy" id="210007"/>
    <lineage>
        <taxon>Bacteria</taxon>
        <taxon>Bacillati</taxon>
        <taxon>Bacillota</taxon>
        <taxon>Bacilli</taxon>
        <taxon>Lactobacillales</taxon>
        <taxon>Streptococcaceae</taxon>
        <taxon>Streptococcus</taxon>
    </lineage>
</organism>
<name>FTSY_STRMU</name>
<protein>
    <recommendedName>
        <fullName evidence="1">Signal recognition particle receptor FtsY</fullName>
        <shortName evidence="1">SRP receptor</shortName>
        <ecNumber evidence="1">3.6.5.4</ecNumber>
    </recommendedName>
</protein>
<feature type="chain" id="PRO_0000415445" description="Signal recognition particle receptor FtsY">
    <location>
        <begin position="1"/>
        <end position="498"/>
    </location>
</feature>
<feature type="region of interest" description="Disordered" evidence="2">
    <location>
        <begin position="1"/>
        <end position="130"/>
    </location>
</feature>
<feature type="region of interest" description="Disordered" evidence="2">
    <location>
        <begin position="147"/>
        <end position="200"/>
    </location>
</feature>
<feature type="compositionally biased region" description="Low complexity" evidence="2">
    <location>
        <begin position="36"/>
        <end position="46"/>
    </location>
</feature>
<feature type="compositionally biased region" description="Polar residues" evidence="2">
    <location>
        <begin position="103"/>
        <end position="120"/>
    </location>
</feature>
<feature type="binding site" evidence="1">
    <location>
        <begin position="301"/>
        <end position="308"/>
    </location>
    <ligand>
        <name>GTP</name>
        <dbReference type="ChEBI" id="CHEBI:37565"/>
    </ligand>
</feature>
<feature type="binding site" evidence="1">
    <location>
        <begin position="383"/>
        <end position="387"/>
    </location>
    <ligand>
        <name>GTP</name>
        <dbReference type="ChEBI" id="CHEBI:37565"/>
    </ligand>
</feature>
<feature type="binding site" evidence="1">
    <location>
        <begin position="447"/>
        <end position="450"/>
    </location>
    <ligand>
        <name>GTP</name>
        <dbReference type="ChEBI" id="CHEBI:37565"/>
    </ligand>
</feature>
<proteinExistence type="inferred from homology"/>
<keyword id="KW-1003">Cell membrane</keyword>
<keyword id="KW-0963">Cytoplasm</keyword>
<keyword id="KW-0342">GTP-binding</keyword>
<keyword id="KW-0378">Hydrolase</keyword>
<keyword id="KW-0472">Membrane</keyword>
<keyword id="KW-0547">Nucleotide-binding</keyword>
<keyword id="KW-0675">Receptor</keyword>
<keyword id="KW-1185">Reference proteome</keyword>
<gene>
    <name evidence="1" type="primary">ftsY</name>
    <name type="ordered locus">SMU_744</name>
</gene>